<keyword id="KW-1185">Reference proteome</keyword>
<keyword id="KW-0687">Ribonucleoprotein</keyword>
<keyword id="KW-0689">Ribosomal protein</keyword>
<proteinExistence type="inferred from homology"/>
<evidence type="ECO:0000255" key="1">
    <source>
        <dbReference type="HAMAP-Rule" id="MF_00539"/>
    </source>
</evidence>
<evidence type="ECO:0000256" key="2">
    <source>
        <dbReference type="SAM" id="MobiDB-lite"/>
    </source>
</evidence>
<evidence type="ECO:0000305" key="3"/>
<dbReference type="EMBL" id="CP001087">
    <property type="protein sequence ID" value="ACN16252.1"/>
    <property type="molecule type" value="Genomic_DNA"/>
</dbReference>
<dbReference type="RefSeq" id="WP_015905014.1">
    <property type="nucleotide sequence ID" value="NC_012108.1"/>
</dbReference>
<dbReference type="SMR" id="C0QLE8"/>
<dbReference type="STRING" id="177437.HRM2_31710"/>
<dbReference type="KEGG" id="dat:HRM2_31710"/>
<dbReference type="eggNOG" id="COG0211">
    <property type="taxonomic scope" value="Bacteria"/>
</dbReference>
<dbReference type="HOGENOM" id="CLU_095424_4_0_7"/>
<dbReference type="OrthoDB" id="9803474at2"/>
<dbReference type="Proteomes" id="UP000000442">
    <property type="component" value="Chromosome"/>
</dbReference>
<dbReference type="GO" id="GO:0022625">
    <property type="term" value="C:cytosolic large ribosomal subunit"/>
    <property type="evidence" value="ECO:0007669"/>
    <property type="project" value="TreeGrafter"/>
</dbReference>
<dbReference type="GO" id="GO:0003735">
    <property type="term" value="F:structural constituent of ribosome"/>
    <property type="evidence" value="ECO:0007669"/>
    <property type="project" value="InterPro"/>
</dbReference>
<dbReference type="GO" id="GO:0006412">
    <property type="term" value="P:translation"/>
    <property type="evidence" value="ECO:0007669"/>
    <property type="project" value="UniProtKB-UniRule"/>
</dbReference>
<dbReference type="FunFam" id="2.40.50.100:FF:000004">
    <property type="entry name" value="50S ribosomal protein L27"/>
    <property type="match status" value="1"/>
</dbReference>
<dbReference type="Gene3D" id="2.40.50.100">
    <property type="match status" value="1"/>
</dbReference>
<dbReference type="HAMAP" id="MF_00539">
    <property type="entry name" value="Ribosomal_bL27"/>
    <property type="match status" value="1"/>
</dbReference>
<dbReference type="InterPro" id="IPR001684">
    <property type="entry name" value="Ribosomal_bL27"/>
</dbReference>
<dbReference type="NCBIfam" id="TIGR00062">
    <property type="entry name" value="L27"/>
    <property type="match status" value="1"/>
</dbReference>
<dbReference type="PANTHER" id="PTHR15893:SF0">
    <property type="entry name" value="LARGE RIBOSOMAL SUBUNIT PROTEIN BL27M"/>
    <property type="match status" value="1"/>
</dbReference>
<dbReference type="PANTHER" id="PTHR15893">
    <property type="entry name" value="RIBOSOMAL PROTEIN L27"/>
    <property type="match status" value="1"/>
</dbReference>
<dbReference type="Pfam" id="PF01016">
    <property type="entry name" value="Ribosomal_L27"/>
    <property type="match status" value="1"/>
</dbReference>
<dbReference type="PRINTS" id="PR00063">
    <property type="entry name" value="RIBOSOMALL27"/>
</dbReference>
<dbReference type="SUPFAM" id="SSF110324">
    <property type="entry name" value="Ribosomal L27 protein-like"/>
    <property type="match status" value="1"/>
</dbReference>
<comment type="similarity">
    <text evidence="1">Belongs to the bacterial ribosomal protein bL27 family.</text>
</comment>
<feature type="chain" id="PRO_1000211923" description="Large ribosomal subunit protein bL27">
    <location>
        <begin position="1"/>
        <end position="84"/>
    </location>
</feature>
<feature type="region of interest" description="Disordered" evidence="2">
    <location>
        <begin position="1"/>
        <end position="25"/>
    </location>
</feature>
<organism>
    <name type="scientific">Desulforapulum autotrophicum (strain ATCC 43914 / DSM 3382 / VKM B-1955 / HRM2)</name>
    <name type="common">Desulfobacterium autotrophicum</name>
    <dbReference type="NCBI Taxonomy" id="177437"/>
    <lineage>
        <taxon>Bacteria</taxon>
        <taxon>Pseudomonadati</taxon>
        <taxon>Thermodesulfobacteriota</taxon>
        <taxon>Desulfobacteria</taxon>
        <taxon>Desulfobacterales</taxon>
        <taxon>Desulfobacteraceae</taxon>
        <taxon>Desulforapulum</taxon>
    </lineage>
</organism>
<sequence length="84" mass="9121">MSHKKAGGSTRNGRDSNAQRRGVKKFGGQTVVAGNILVRQLGTKIHPGSNVGMGKDYTLFSKIDGVVAYERKGRDKKRVSVYEA</sequence>
<reference key="1">
    <citation type="journal article" date="2009" name="Environ. Microbiol.">
        <title>Genome sequence of Desulfobacterium autotrophicum HRM2, a marine sulfate reducer oxidizing organic carbon completely to carbon dioxide.</title>
        <authorList>
            <person name="Strittmatter A.W."/>
            <person name="Liesegang H."/>
            <person name="Rabus R."/>
            <person name="Decker I."/>
            <person name="Amann J."/>
            <person name="Andres S."/>
            <person name="Henne A."/>
            <person name="Fricke W.F."/>
            <person name="Martinez-Arias R."/>
            <person name="Bartels D."/>
            <person name="Goesmann A."/>
            <person name="Krause L."/>
            <person name="Puehler A."/>
            <person name="Klenk H.P."/>
            <person name="Richter M."/>
            <person name="Schuler M."/>
            <person name="Gloeckner F.O."/>
            <person name="Meyerdierks A."/>
            <person name="Gottschalk G."/>
            <person name="Amann R."/>
        </authorList>
    </citation>
    <scope>NUCLEOTIDE SEQUENCE [LARGE SCALE GENOMIC DNA]</scope>
    <source>
        <strain>ATCC 43914 / DSM 3382 / VKM B-1955 / HRM2</strain>
    </source>
</reference>
<gene>
    <name evidence="1" type="primary">rpmA</name>
    <name type="ordered locus">HRM2_31710</name>
</gene>
<accession>C0QLE8</accession>
<name>RL27_DESAH</name>
<protein>
    <recommendedName>
        <fullName evidence="1">Large ribosomal subunit protein bL27</fullName>
    </recommendedName>
    <alternativeName>
        <fullName evidence="3">50S ribosomal protein L27</fullName>
    </alternativeName>
</protein>